<feature type="signal peptide" evidence="2">
    <location>
        <begin position="1"/>
        <end position="34"/>
    </location>
</feature>
<feature type="propeptide" id="PRO_0000045178" evidence="1">
    <location>
        <begin position="35"/>
        <end position="290"/>
    </location>
</feature>
<feature type="chain" id="PRO_0000045179" description="Lipase 1">
    <location>
        <begin position="291"/>
        <end position="680"/>
    </location>
</feature>
<feature type="region of interest" description="Disordered" evidence="4">
    <location>
        <begin position="82"/>
        <end position="259"/>
    </location>
</feature>
<feature type="compositionally biased region" description="Basic and acidic residues" evidence="4">
    <location>
        <begin position="84"/>
        <end position="112"/>
    </location>
</feature>
<feature type="compositionally biased region" description="Polar residues" evidence="4">
    <location>
        <begin position="125"/>
        <end position="138"/>
    </location>
</feature>
<feature type="compositionally biased region" description="Low complexity" evidence="4">
    <location>
        <begin position="148"/>
        <end position="170"/>
    </location>
</feature>
<feature type="compositionally biased region" description="Polar residues" evidence="4">
    <location>
        <begin position="204"/>
        <end position="223"/>
    </location>
</feature>
<feature type="compositionally biased region" description="Basic and acidic residues" evidence="4">
    <location>
        <begin position="224"/>
        <end position="234"/>
    </location>
</feature>
<feature type="compositionally biased region" description="Polar residues" evidence="4">
    <location>
        <begin position="235"/>
        <end position="246"/>
    </location>
</feature>
<feature type="active site" description="Nucleophile" evidence="1">
    <location>
        <position position="408"/>
    </location>
</feature>
<feature type="active site" description="Charge relay system" evidence="3">
    <location>
        <position position="600"/>
    </location>
</feature>
<feature type="active site" description="Charge relay system" evidence="3">
    <location>
        <position position="639"/>
    </location>
</feature>
<feature type="binding site" evidence="1">
    <location>
        <position position="638"/>
    </location>
    <ligand>
        <name>Ca(2+)</name>
        <dbReference type="ChEBI" id="CHEBI:29108"/>
    </ligand>
</feature>
<feature type="binding site" evidence="1">
    <location>
        <position position="641"/>
    </location>
    <ligand>
        <name>Ca(2+)</name>
        <dbReference type="ChEBI" id="CHEBI:29108"/>
    </ligand>
</feature>
<feature type="binding site" evidence="1">
    <location>
        <position position="646"/>
    </location>
    <ligand>
        <name>Ca(2+)</name>
        <dbReference type="ChEBI" id="CHEBI:29108"/>
    </ligand>
</feature>
<feature type="binding site" evidence="1">
    <location>
        <position position="649"/>
    </location>
    <ligand>
        <name>Ca(2+)</name>
        <dbReference type="ChEBI" id="CHEBI:29108"/>
    </ligand>
</feature>
<proteinExistence type="inferred from homology"/>
<evidence type="ECO:0000250" key="1"/>
<evidence type="ECO:0000255" key="2"/>
<evidence type="ECO:0000255" key="3">
    <source>
        <dbReference type="PROSITE-ProRule" id="PRU10037"/>
    </source>
</evidence>
<evidence type="ECO:0000256" key="4">
    <source>
        <dbReference type="SAM" id="MobiDB-lite"/>
    </source>
</evidence>
<evidence type="ECO:0000305" key="5"/>
<protein>
    <recommendedName>
        <fullName>Lipase 1</fullName>
        <ecNumber>3.1.1.3</ecNumber>
    </recommendedName>
    <alternativeName>
        <fullName>Glycerol ester hydrolase 1</fullName>
    </alternativeName>
</protein>
<keyword id="KW-0106">Calcium</keyword>
<keyword id="KW-0378">Hydrolase</keyword>
<keyword id="KW-0442">Lipid degradation</keyword>
<keyword id="KW-0443">Lipid metabolism</keyword>
<keyword id="KW-0479">Metal-binding</keyword>
<keyword id="KW-0964">Secreted</keyword>
<keyword id="KW-0732">Signal</keyword>
<keyword id="KW-0865">Zymogen</keyword>
<reference key="1">
    <citation type="journal article" date="2005" name="J. Bacteriol.">
        <title>Insights on evolution of virulence and resistance from the complete genome analysis of an early methicillin-resistant Staphylococcus aureus strain and a biofilm-producing methicillin-resistant Staphylococcus epidermidis strain.</title>
        <authorList>
            <person name="Gill S.R."/>
            <person name="Fouts D.E."/>
            <person name="Archer G.L."/>
            <person name="Mongodin E.F."/>
            <person name="DeBoy R.T."/>
            <person name="Ravel J."/>
            <person name="Paulsen I.T."/>
            <person name="Kolonay J.F."/>
            <person name="Brinkac L.M."/>
            <person name="Beanan M.J."/>
            <person name="Dodson R.J."/>
            <person name="Daugherty S.C."/>
            <person name="Madupu R."/>
            <person name="Angiuoli S.V."/>
            <person name="Durkin A.S."/>
            <person name="Haft D.H."/>
            <person name="Vamathevan J.J."/>
            <person name="Khouri H."/>
            <person name="Utterback T.R."/>
            <person name="Lee C."/>
            <person name="Dimitrov G."/>
            <person name="Jiang L."/>
            <person name="Qin H."/>
            <person name="Weidman J."/>
            <person name="Tran K."/>
            <person name="Kang K.H."/>
            <person name="Hance I.R."/>
            <person name="Nelson K.E."/>
            <person name="Fraser C.M."/>
        </authorList>
    </citation>
    <scope>NUCLEOTIDE SEQUENCE [LARGE SCALE GENOMIC DNA]</scope>
    <source>
        <strain>COL</strain>
    </source>
</reference>
<sequence length="680" mass="76675">MKSQNKYSIRKFSVGASSILIATLLFLSGGQAQAAEKQVNMGNSQEDTVTAQSIGDQQTRENANYQRENGVDEQQHTENLTKNLHNDKTISEENHRKTDDLNKDQLKDDKKSSLNNKNIQRDTTKNNNANPSDVNQGLEQAINDGKQSKVASQQQSKEADNSQDSNANNNLPSQSRIKEAPSLNKLDQTSQREIVNETEIEKVQPQQNNQANDKITNYNFNNEQEVKPQKDEKTLSVSDLKNNQKSPVEPTKDNDKKNGLNLLKSSAVATLPNKGTKELTAKAKDDQTNKVAKQGQYKNQDPIVLVHGFNGFTDDINPSVLAHYWGGNKMNIRQDLEENGYKAYEASISAFGSNYDRAVELYYYIKGGRVDYGAAHAAKYGHERYGKTYEGIYKDWKPGQKVHLVGHSMGGQTIRQLEELLRNGNREEIEYQKKHGGEISPLFKGNHDNMISSITTLGTPHNGTHASDLAGNEALVRQIVFDIGKMFGNKNSRVDFGLAQWGLKQKPNESYIDYVKRVKQSNLWKSKDNGFYDLTREGATDLNRKTSLNPNIVYKTYTGEATHKALNSDRQKADLNMFFPFVITGNLIGKATEKEWRENDGLVSVISSQHPFNQAYTKATDKIQKGIWQVTPTKHDWDHVDFVGQDSSDTVRTREELQDFWHHLADDLVKTEKLTDTKQA</sequence>
<accession>Q5HCM7</accession>
<gene>
    <name type="primary">lip1</name>
    <name type="ordered locus">SACOL2694</name>
</gene>
<name>LIP1_STAAC</name>
<comment type="catalytic activity">
    <reaction>
        <text>a triacylglycerol + H2O = a diacylglycerol + a fatty acid + H(+)</text>
        <dbReference type="Rhea" id="RHEA:12044"/>
        <dbReference type="ChEBI" id="CHEBI:15377"/>
        <dbReference type="ChEBI" id="CHEBI:15378"/>
        <dbReference type="ChEBI" id="CHEBI:17855"/>
        <dbReference type="ChEBI" id="CHEBI:18035"/>
        <dbReference type="ChEBI" id="CHEBI:28868"/>
        <dbReference type="EC" id="3.1.1.3"/>
    </reaction>
</comment>
<comment type="subcellular location">
    <subcellularLocation>
        <location evidence="1">Secreted</location>
    </subcellularLocation>
</comment>
<comment type="similarity">
    <text evidence="5">Belongs to the AB hydrolase superfamily. Lipase family.</text>
</comment>
<dbReference type="EC" id="3.1.1.3"/>
<dbReference type="EMBL" id="CP000046">
    <property type="protein sequence ID" value="AAW37342.1"/>
    <property type="molecule type" value="Genomic_DNA"/>
</dbReference>
<dbReference type="RefSeq" id="WP_000842036.1">
    <property type="nucleotide sequence ID" value="NZ_JBGOFO010000001.1"/>
</dbReference>
<dbReference type="SMR" id="Q5HCM7"/>
<dbReference type="ESTHER" id="staau-LIP">
    <property type="family name" value="Bacterial_lip_FamI.6"/>
</dbReference>
<dbReference type="KEGG" id="sac:SACOL2694"/>
<dbReference type="HOGENOM" id="CLU_023555_2_1_9"/>
<dbReference type="Proteomes" id="UP000000530">
    <property type="component" value="Chromosome"/>
</dbReference>
<dbReference type="GO" id="GO:0005576">
    <property type="term" value="C:extracellular region"/>
    <property type="evidence" value="ECO:0007669"/>
    <property type="project" value="UniProtKB-SubCell"/>
</dbReference>
<dbReference type="GO" id="GO:0046872">
    <property type="term" value="F:metal ion binding"/>
    <property type="evidence" value="ECO:0007669"/>
    <property type="project" value="UniProtKB-KW"/>
</dbReference>
<dbReference type="GO" id="GO:0004806">
    <property type="term" value="F:triacylglycerol lipase activity"/>
    <property type="evidence" value="ECO:0007669"/>
    <property type="project" value="UniProtKB-EC"/>
</dbReference>
<dbReference type="GO" id="GO:0016042">
    <property type="term" value="P:lipid catabolic process"/>
    <property type="evidence" value="ECO:0007669"/>
    <property type="project" value="UniProtKB-KW"/>
</dbReference>
<dbReference type="Gene3D" id="3.40.50.1820">
    <property type="entry name" value="alpha/beta hydrolase"/>
    <property type="match status" value="1"/>
</dbReference>
<dbReference type="InterPro" id="IPR029058">
    <property type="entry name" value="AB_hydrolase_fold"/>
</dbReference>
<dbReference type="InterPro" id="IPR056304">
    <property type="entry name" value="Lip-like_C"/>
</dbReference>
<dbReference type="InterPro" id="IPR005877">
    <property type="entry name" value="YSIRK_signal_dom"/>
</dbReference>
<dbReference type="NCBIfam" id="NF047351">
    <property type="entry name" value="lipase_YSIRK_Sa"/>
    <property type="match status" value="1"/>
</dbReference>
<dbReference type="NCBIfam" id="TIGR01168">
    <property type="entry name" value="YSIRK_signal"/>
    <property type="match status" value="1"/>
</dbReference>
<dbReference type="PANTHER" id="PTHR34043">
    <property type="entry name" value="ALPHA/BETA-HYDROLASES SUPERFAMILY PROTEIN"/>
    <property type="match status" value="1"/>
</dbReference>
<dbReference type="PANTHER" id="PTHR34043:SF3">
    <property type="entry name" value="ALPHA_BETA-HYDROLASES SUPERFAMILY PROTEIN"/>
    <property type="match status" value="1"/>
</dbReference>
<dbReference type="Pfam" id="PF24708">
    <property type="entry name" value="Lip_C"/>
    <property type="match status" value="1"/>
</dbReference>
<dbReference type="Pfam" id="PF04650">
    <property type="entry name" value="YSIRK_signal"/>
    <property type="match status" value="1"/>
</dbReference>
<dbReference type="SUPFAM" id="SSF53474">
    <property type="entry name" value="alpha/beta-Hydrolases"/>
    <property type="match status" value="1"/>
</dbReference>
<dbReference type="PROSITE" id="PS00120">
    <property type="entry name" value="LIPASE_SER"/>
    <property type="match status" value="1"/>
</dbReference>
<organism>
    <name type="scientific">Staphylococcus aureus (strain COL)</name>
    <dbReference type="NCBI Taxonomy" id="93062"/>
    <lineage>
        <taxon>Bacteria</taxon>
        <taxon>Bacillati</taxon>
        <taxon>Bacillota</taxon>
        <taxon>Bacilli</taxon>
        <taxon>Bacillales</taxon>
        <taxon>Staphylococcaceae</taxon>
        <taxon>Staphylococcus</taxon>
    </lineage>
</organism>